<accession>P0AE35</accession>
<accession>P30861</accession>
<accession>P77290</accession>
<name>ARTQ_ECOL6</name>
<protein>
    <recommendedName>
        <fullName>Arginine ABC transporter permease protein ArtQ</fullName>
    </recommendedName>
</protein>
<feature type="chain" id="PRO_0000059962" description="Arginine ABC transporter permease protein ArtQ">
    <location>
        <begin position="1"/>
        <end position="238"/>
    </location>
</feature>
<feature type="topological domain" description="Periplasmic" evidence="2">
    <location>
        <begin position="1"/>
        <end position="14"/>
    </location>
</feature>
<feature type="transmembrane region" description="Helical" evidence="3">
    <location>
        <begin position="15"/>
        <end position="35"/>
    </location>
</feature>
<feature type="topological domain" description="Cytoplasmic" evidence="2">
    <location>
        <begin position="36"/>
        <end position="48"/>
    </location>
</feature>
<feature type="transmembrane region" description="Helical" evidence="3">
    <location>
        <begin position="49"/>
        <end position="69"/>
    </location>
</feature>
<feature type="topological domain" description="Periplasmic" evidence="2">
    <location>
        <begin position="70"/>
        <end position="98"/>
    </location>
</feature>
<feature type="transmembrane region" description="Helical" evidence="3">
    <location>
        <begin position="99"/>
        <end position="119"/>
    </location>
</feature>
<feature type="topological domain" description="Cytoplasmic" evidence="2">
    <location>
        <begin position="120"/>
        <end position="168"/>
    </location>
</feature>
<feature type="transmembrane region" description="Helical" evidence="3">
    <location>
        <begin position="169"/>
        <end position="189"/>
    </location>
</feature>
<feature type="topological domain" description="Periplasmic" evidence="2">
    <location>
        <begin position="190"/>
        <end position="201"/>
    </location>
</feature>
<feature type="transmembrane region" description="Helical" evidence="3">
    <location>
        <begin position="202"/>
        <end position="222"/>
    </location>
</feature>
<feature type="topological domain" description="Cytoplasmic" evidence="2">
    <location>
        <begin position="223"/>
        <end position="238"/>
    </location>
</feature>
<feature type="domain" description="ABC transmembrane type-1" evidence="3">
    <location>
        <begin position="11"/>
        <end position="223"/>
    </location>
</feature>
<comment type="function">
    <text evidence="1">Part of the ABC transporter complex ArtPIQMJ involved in arginine transport. Probably responsible for the translocation of the substrate across the membrane (By similarity).</text>
</comment>
<comment type="subunit">
    <text evidence="1">The complex is composed of two ATP-binding proteins (ArtP), two transmembrane proteins (ArtM and ArtQ) and two solute-binding proteins (ArtJ and ArtI).</text>
</comment>
<comment type="subcellular location">
    <subcellularLocation>
        <location evidence="1">Cell inner membrane</location>
        <topology evidence="3">Multi-pass membrane protein</topology>
    </subcellularLocation>
</comment>
<comment type="similarity">
    <text evidence="4">Belongs to the binding-protein-dependent transport system permease family. HisMQ subfamily.</text>
</comment>
<proteinExistence type="inferred from homology"/>
<sequence length="238" mass="26217">MNEFFPLASAAGMTVGLAVCALIVGLALAMFFAVWESAKWRPVAWAGSALVTILRGLPEILVVLFIYFGSSQLLLTLSDGFTINLGFVQIPVQMDIENFDVSPFLCGVIALSLLYAAYASQTLRGALKAVPVGQWESGQALGLSKSAIFFRLVMPQMWRHALPGLGNQWLVLLKDTALVSLISVNDLMLQTKSIATRTQEPFTWYIVAAAIYLVITLLSQYILKRIDLRATRFERRPS</sequence>
<dbReference type="EMBL" id="AE014075">
    <property type="protein sequence ID" value="AAN79468.1"/>
    <property type="molecule type" value="Genomic_DNA"/>
</dbReference>
<dbReference type="RefSeq" id="WP_001001691.1">
    <property type="nucleotide sequence ID" value="NZ_CP051263.1"/>
</dbReference>
<dbReference type="SMR" id="P0AE35"/>
<dbReference type="STRING" id="199310.c0995"/>
<dbReference type="GeneID" id="93776560"/>
<dbReference type="KEGG" id="ecc:c0995"/>
<dbReference type="eggNOG" id="COG4215">
    <property type="taxonomic scope" value="Bacteria"/>
</dbReference>
<dbReference type="HOGENOM" id="CLU_019602_1_4_6"/>
<dbReference type="BioCyc" id="ECOL199310:C0995-MONOMER"/>
<dbReference type="Proteomes" id="UP000001410">
    <property type="component" value="Chromosome"/>
</dbReference>
<dbReference type="GO" id="GO:0043190">
    <property type="term" value="C:ATP-binding cassette (ABC) transporter complex"/>
    <property type="evidence" value="ECO:0007669"/>
    <property type="project" value="InterPro"/>
</dbReference>
<dbReference type="GO" id="GO:0022857">
    <property type="term" value="F:transmembrane transporter activity"/>
    <property type="evidence" value="ECO:0007669"/>
    <property type="project" value="InterPro"/>
</dbReference>
<dbReference type="GO" id="GO:0006865">
    <property type="term" value="P:amino acid transport"/>
    <property type="evidence" value="ECO:0007669"/>
    <property type="project" value="UniProtKB-KW"/>
</dbReference>
<dbReference type="CDD" id="cd06261">
    <property type="entry name" value="TM_PBP2"/>
    <property type="match status" value="1"/>
</dbReference>
<dbReference type="FunFam" id="1.10.3720.10:FF:000027">
    <property type="entry name" value="Arginine ABC transporter, permease protein ArtQ"/>
    <property type="match status" value="1"/>
</dbReference>
<dbReference type="Gene3D" id="1.10.3720.10">
    <property type="entry name" value="MetI-like"/>
    <property type="match status" value="1"/>
</dbReference>
<dbReference type="InterPro" id="IPR010065">
    <property type="entry name" value="AA_ABC_transptr_permease_3TM"/>
</dbReference>
<dbReference type="InterPro" id="IPR051613">
    <property type="entry name" value="ABC_transp_permease_HisMQ"/>
</dbReference>
<dbReference type="InterPro" id="IPR000515">
    <property type="entry name" value="MetI-like"/>
</dbReference>
<dbReference type="InterPro" id="IPR035906">
    <property type="entry name" value="MetI-like_sf"/>
</dbReference>
<dbReference type="NCBIfam" id="TIGR01726">
    <property type="entry name" value="HEQRo_perm_3TM"/>
    <property type="match status" value="1"/>
</dbReference>
<dbReference type="NCBIfam" id="NF008337">
    <property type="entry name" value="PRK11123.1"/>
    <property type="match status" value="1"/>
</dbReference>
<dbReference type="PANTHER" id="PTHR30133:SF2">
    <property type="entry name" value="ARGININE ABC TRANSPORTER PERMEASE PROTEIN ARTQ"/>
    <property type="match status" value="1"/>
</dbReference>
<dbReference type="PANTHER" id="PTHR30133">
    <property type="entry name" value="CATIONIC AMINO ACID TRANSPORTER, MEMBRANE COMPONENT"/>
    <property type="match status" value="1"/>
</dbReference>
<dbReference type="Pfam" id="PF00528">
    <property type="entry name" value="BPD_transp_1"/>
    <property type="match status" value="1"/>
</dbReference>
<dbReference type="SUPFAM" id="SSF161098">
    <property type="entry name" value="MetI-like"/>
    <property type="match status" value="1"/>
</dbReference>
<dbReference type="PROSITE" id="PS50928">
    <property type="entry name" value="ABC_TM1"/>
    <property type="match status" value="1"/>
</dbReference>
<organism>
    <name type="scientific">Escherichia coli O6:H1 (strain CFT073 / ATCC 700928 / UPEC)</name>
    <dbReference type="NCBI Taxonomy" id="199310"/>
    <lineage>
        <taxon>Bacteria</taxon>
        <taxon>Pseudomonadati</taxon>
        <taxon>Pseudomonadota</taxon>
        <taxon>Gammaproteobacteria</taxon>
        <taxon>Enterobacterales</taxon>
        <taxon>Enterobacteriaceae</taxon>
        <taxon>Escherichia</taxon>
    </lineage>
</organism>
<keyword id="KW-0029">Amino-acid transport</keyword>
<keyword id="KW-0997">Cell inner membrane</keyword>
<keyword id="KW-1003">Cell membrane</keyword>
<keyword id="KW-0472">Membrane</keyword>
<keyword id="KW-1185">Reference proteome</keyword>
<keyword id="KW-0812">Transmembrane</keyword>
<keyword id="KW-1133">Transmembrane helix</keyword>
<keyword id="KW-0813">Transport</keyword>
<reference key="1">
    <citation type="journal article" date="2002" name="Proc. Natl. Acad. Sci. U.S.A.">
        <title>Extensive mosaic structure revealed by the complete genome sequence of uropathogenic Escherichia coli.</title>
        <authorList>
            <person name="Welch R.A."/>
            <person name="Burland V."/>
            <person name="Plunkett G. III"/>
            <person name="Redford P."/>
            <person name="Roesch P."/>
            <person name="Rasko D."/>
            <person name="Buckles E.L."/>
            <person name="Liou S.-R."/>
            <person name="Boutin A."/>
            <person name="Hackett J."/>
            <person name="Stroud D."/>
            <person name="Mayhew G.F."/>
            <person name="Rose D.J."/>
            <person name="Zhou S."/>
            <person name="Schwartz D.C."/>
            <person name="Perna N.T."/>
            <person name="Mobley H.L.T."/>
            <person name="Donnenberg M.S."/>
            <person name="Blattner F.R."/>
        </authorList>
    </citation>
    <scope>NUCLEOTIDE SEQUENCE [LARGE SCALE GENOMIC DNA]</scope>
    <source>
        <strain>CFT073 / ATCC 700928 / UPEC</strain>
    </source>
</reference>
<gene>
    <name type="primary">artQ</name>
    <name type="ordered locus">c0995</name>
</gene>
<evidence type="ECO:0000250" key="1"/>
<evidence type="ECO:0000255" key="2"/>
<evidence type="ECO:0000255" key="3">
    <source>
        <dbReference type="PROSITE-ProRule" id="PRU00441"/>
    </source>
</evidence>
<evidence type="ECO:0000305" key="4"/>